<protein>
    <recommendedName>
        <fullName evidence="1">Valine--tRNA ligase</fullName>
        <ecNumber evidence="1">6.1.1.9</ecNumber>
    </recommendedName>
    <alternativeName>
        <fullName evidence="1">Valyl-tRNA synthetase</fullName>
        <shortName evidence="1">ValRS</shortName>
    </alternativeName>
</protein>
<reference key="1">
    <citation type="submission" date="2005-09" db="EMBL/GenBank/DDBJ databases">
        <title>Complete sequence of chromosome 1 of Rhodobacter sphaeroides 2.4.1.</title>
        <authorList>
            <person name="Copeland A."/>
            <person name="Lucas S."/>
            <person name="Lapidus A."/>
            <person name="Barry K."/>
            <person name="Detter J.C."/>
            <person name="Glavina T."/>
            <person name="Hammon N."/>
            <person name="Israni S."/>
            <person name="Pitluck S."/>
            <person name="Richardson P."/>
            <person name="Mackenzie C."/>
            <person name="Choudhary M."/>
            <person name="Larimer F."/>
            <person name="Hauser L.J."/>
            <person name="Land M."/>
            <person name="Donohue T.J."/>
            <person name="Kaplan S."/>
        </authorList>
    </citation>
    <scope>NUCLEOTIDE SEQUENCE [LARGE SCALE GENOMIC DNA]</scope>
    <source>
        <strain>ATCC 17023 / DSM 158 / JCM 6121 / CCUG 31486 / LMG 2827 / NBRC 12203 / NCIMB 8253 / ATH 2.4.1.</strain>
    </source>
</reference>
<comment type="function">
    <text evidence="1">Catalyzes the attachment of valine to tRNA(Val). As ValRS can inadvertently accommodate and process structurally similar amino acids such as threonine, to avoid such errors, it has a 'posttransfer' editing activity that hydrolyzes mischarged Thr-tRNA(Val) in a tRNA-dependent manner.</text>
</comment>
<comment type="catalytic activity">
    <reaction evidence="1">
        <text>tRNA(Val) + L-valine + ATP = L-valyl-tRNA(Val) + AMP + diphosphate</text>
        <dbReference type="Rhea" id="RHEA:10704"/>
        <dbReference type="Rhea" id="RHEA-COMP:9672"/>
        <dbReference type="Rhea" id="RHEA-COMP:9708"/>
        <dbReference type="ChEBI" id="CHEBI:30616"/>
        <dbReference type="ChEBI" id="CHEBI:33019"/>
        <dbReference type="ChEBI" id="CHEBI:57762"/>
        <dbReference type="ChEBI" id="CHEBI:78442"/>
        <dbReference type="ChEBI" id="CHEBI:78537"/>
        <dbReference type="ChEBI" id="CHEBI:456215"/>
        <dbReference type="EC" id="6.1.1.9"/>
    </reaction>
</comment>
<comment type="subunit">
    <text evidence="1">Monomer.</text>
</comment>
<comment type="subcellular location">
    <subcellularLocation>
        <location evidence="1">Cytoplasm</location>
    </subcellularLocation>
</comment>
<comment type="domain">
    <text evidence="1">ValRS has two distinct active sites: one for aminoacylation and one for editing. The misactivated threonine is translocated from the active site to the editing site.</text>
</comment>
<comment type="domain">
    <text evidence="1">The C-terminal coiled-coil domain is crucial for aminoacylation activity.</text>
</comment>
<comment type="similarity">
    <text evidence="1">Belongs to the class-I aminoacyl-tRNA synthetase family. ValS type 1 subfamily.</text>
</comment>
<dbReference type="EC" id="6.1.1.9" evidence="1"/>
<dbReference type="EMBL" id="CP000143">
    <property type="protein sequence ID" value="ABA78139.1"/>
    <property type="molecule type" value="Genomic_DNA"/>
</dbReference>
<dbReference type="RefSeq" id="WP_011337139.1">
    <property type="nucleotide sequence ID" value="NC_007493.2"/>
</dbReference>
<dbReference type="RefSeq" id="YP_352040.1">
    <property type="nucleotide sequence ID" value="NC_007493.2"/>
</dbReference>
<dbReference type="SMR" id="Q3J4Z5"/>
<dbReference type="STRING" id="272943.RSP_1989"/>
<dbReference type="EnsemblBacteria" id="ABA78139">
    <property type="protein sequence ID" value="ABA78139"/>
    <property type="gene ID" value="RSP_1989"/>
</dbReference>
<dbReference type="GeneID" id="3719322"/>
<dbReference type="KEGG" id="rsp:RSP_1989"/>
<dbReference type="PATRIC" id="fig|272943.9.peg.878"/>
<dbReference type="eggNOG" id="COG0525">
    <property type="taxonomic scope" value="Bacteria"/>
</dbReference>
<dbReference type="OrthoDB" id="9810365at2"/>
<dbReference type="PhylomeDB" id="Q3J4Z5"/>
<dbReference type="Proteomes" id="UP000002703">
    <property type="component" value="Chromosome 1"/>
</dbReference>
<dbReference type="GO" id="GO:0005829">
    <property type="term" value="C:cytosol"/>
    <property type="evidence" value="ECO:0007669"/>
    <property type="project" value="TreeGrafter"/>
</dbReference>
<dbReference type="GO" id="GO:0002161">
    <property type="term" value="F:aminoacyl-tRNA deacylase activity"/>
    <property type="evidence" value="ECO:0007669"/>
    <property type="project" value="InterPro"/>
</dbReference>
<dbReference type="GO" id="GO:0005524">
    <property type="term" value="F:ATP binding"/>
    <property type="evidence" value="ECO:0007669"/>
    <property type="project" value="UniProtKB-UniRule"/>
</dbReference>
<dbReference type="GO" id="GO:0004832">
    <property type="term" value="F:valine-tRNA ligase activity"/>
    <property type="evidence" value="ECO:0007669"/>
    <property type="project" value="UniProtKB-UniRule"/>
</dbReference>
<dbReference type="GO" id="GO:0006438">
    <property type="term" value="P:valyl-tRNA aminoacylation"/>
    <property type="evidence" value="ECO:0007669"/>
    <property type="project" value="UniProtKB-UniRule"/>
</dbReference>
<dbReference type="CDD" id="cd07962">
    <property type="entry name" value="Anticodon_Ia_Val"/>
    <property type="match status" value="1"/>
</dbReference>
<dbReference type="CDD" id="cd00817">
    <property type="entry name" value="ValRS_core"/>
    <property type="match status" value="1"/>
</dbReference>
<dbReference type="FunFam" id="1.10.287.380:FF:000001">
    <property type="entry name" value="Valine--tRNA ligase"/>
    <property type="match status" value="1"/>
</dbReference>
<dbReference type="FunFam" id="3.40.50.620:FF:000032">
    <property type="entry name" value="Valine--tRNA ligase"/>
    <property type="match status" value="1"/>
</dbReference>
<dbReference type="Gene3D" id="3.40.50.620">
    <property type="entry name" value="HUPs"/>
    <property type="match status" value="3"/>
</dbReference>
<dbReference type="Gene3D" id="1.10.730.10">
    <property type="entry name" value="Isoleucyl-tRNA Synthetase, Domain 1"/>
    <property type="match status" value="1"/>
</dbReference>
<dbReference type="Gene3D" id="1.10.287.380">
    <property type="entry name" value="Valyl-tRNA synthetase, C-terminal domain"/>
    <property type="match status" value="1"/>
</dbReference>
<dbReference type="Gene3D" id="3.90.740.10">
    <property type="entry name" value="Valyl/Leucyl/Isoleucyl-tRNA synthetase, editing domain"/>
    <property type="match status" value="2"/>
</dbReference>
<dbReference type="HAMAP" id="MF_02004">
    <property type="entry name" value="Val_tRNA_synth_type1"/>
    <property type="match status" value="1"/>
</dbReference>
<dbReference type="InterPro" id="IPR001412">
    <property type="entry name" value="aa-tRNA-synth_I_CS"/>
</dbReference>
<dbReference type="InterPro" id="IPR002300">
    <property type="entry name" value="aa-tRNA-synth_Ia"/>
</dbReference>
<dbReference type="InterPro" id="IPR033705">
    <property type="entry name" value="Anticodon_Ia_Val"/>
</dbReference>
<dbReference type="InterPro" id="IPR013155">
    <property type="entry name" value="M/V/L/I-tRNA-synth_anticd-bd"/>
</dbReference>
<dbReference type="InterPro" id="IPR014729">
    <property type="entry name" value="Rossmann-like_a/b/a_fold"/>
</dbReference>
<dbReference type="InterPro" id="IPR010978">
    <property type="entry name" value="tRNA-bd_arm"/>
</dbReference>
<dbReference type="InterPro" id="IPR009080">
    <property type="entry name" value="tRNAsynth_Ia_anticodon-bd"/>
</dbReference>
<dbReference type="InterPro" id="IPR037118">
    <property type="entry name" value="Val-tRNA_synth_C_sf"/>
</dbReference>
<dbReference type="InterPro" id="IPR019499">
    <property type="entry name" value="Val-tRNA_synth_tRNA-bd"/>
</dbReference>
<dbReference type="InterPro" id="IPR009008">
    <property type="entry name" value="Val/Leu/Ile-tRNA-synth_edit"/>
</dbReference>
<dbReference type="InterPro" id="IPR002303">
    <property type="entry name" value="Valyl-tRNA_ligase"/>
</dbReference>
<dbReference type="NCBIfam" id="NF004349">
    <property type="entry name" value="PRK05729.1"/>
    <property type="match status" value="1"/>
</dbReference>
<dbReference type="NCBIfam" id="TIGR00422">
    <property type="entry name" value="valS"/>
    <property type="match status" value="1"/>
</dbReference>
<dbReference type="PANTHER" id="PTHR11946:SF93">
    <property type="entry name" value="VALINE--TRNA LIGASE, CHLOROPLASTIC_MITOCHONDRIAL 2"/>
    <property type="match status" value="1"/>
</dbReference>
<dbReference type="PANTHER" id="PTHR11946">
    <property type="entry name" value="VALYL-TRNA SYNTHETASES"/>
    <property type="match status" value="1"/>
</dbReference>
<dbReference type="Pfam" id="PF08264">
    <property type="entry name" value="Anticodon_1"/>
    <property type="match status" value="1"/>
</dbReference>
<dbReference type="Pfam" id="PF00133">
    <property type="entry name" value="tRNA-synt_1"/>
    <property type="match status" value="2"/>
</dbReference>
<dbReference type="Pfam" id="PF10458">
    <property type="entry name" value="Val_tRNA-synt_C"/>
    <property type="match status" value="1"/>
</dbReference>
<dbReference type="PRINTS" id="PR00986">
    <property type="entry name" value="TRNASYNTHVAL"/>
</dbReference>
<dbReference type="SUPFAM" id="SSF47323">
    <property type="entry name" value="Anticodon-binding domain of a subclass of class I aminoacyl-tRNA synthetases"/>
    <property type="match status" value="1"/>
</dbReference>
<dbReference type="SUPFAM" id="SSF52374">
    <property type="entry name" value="Nucleotidylyl transferase"/>
    <property type="match status" value="1"/>
</dbReference>
<dbReference type="SUPFAM" id="SSF46589">
    <property type="entry name" value="tRNA-binding arm"/>
    <property type="match status" value="1"/>
</dbReference>
<dbReference type="SUPFAM" id="SSF50677">
    <property type="entry name" value="ValRS/IleRS/LeuRS editing domain"/>
    <property type="match status" value="1"/>
</dbReference>
<dbReference type="PROSITE" id="PS00178">
    <property type="entry name" value="AA_TRNA_LIGASE_I"/>
    <property type="match status" value="1"/>
</dbReference>
<sequence>MPMDKTFNAAEAEARLYDAWEKAGAFRAGANASRPETFCIMIPPPNVTGSLHMGHAFNNTLQDILTRWHRMRGFDTLWQPGQDHAGIATQMVVERELAKSGQPGRREMGREAFLEKVWEWKEQSGGTIVNQLKRLGASCDWSRNAFTMDPNFQRAVLKVFVDLYEKGFIYRGKRLVNWDPHFETAISDLEVEQVEVNGNMWRLRYQLADGATYRHPVAFDEEGRPTEWEERDYLTVATTRPETMLGDTGIAVNPADERYAHLIGKEVVLPLVGRRIPIVADDYADPSKGTGAVKITPAHDFNDWGVGQRTGLRAINVMSGRATMFLIENPDFTEGCAPSEEALALDGLDRYEARKRVVALAEEQGWLDGIDQDRHMVPHGDRSKVAIEPMLTDQWFVDTAQIVQPAIDAVRTGRTEILPERDAKTYFHWLENIEPWCISRQLWWGHQIPVWYGLDIWPARFEDDGDDTLDEVEIFELLEDGAFNHADPTHHCAFDFEGVSEKFLDDLASLPHPLNNARVVEVASRAEAIDRLAQALADYNLNEDPTHLVYPVWRDPDVLDTWFSSGLWPIGTLGWPEETPELARYFPTNVLITGFDIIFFWVARMMMMQLAVVNEVPFKTVYVHALVRDEKGKKMSKSLGNVLDPLELIDEFGADAVRFTLTAMAAMGRDLKLSTARIQGYRNFGTKLWNACRFAEMNGVWEGHATQAAPPAATATVNRWIIGETGRVREEVDAALAAYRFDSAANALYAFVWGKVCDWYVEFSKPLFDTEAAAETRATMGWVLDQCMVLLHPIMPFITEDLWATTGSRTKMLVHSDWPSFGAELVDPAADREMSWVISLIEEIRSARAQVHVPAGLKLPVVQLALDAAGREALARNEALILRLARLEGFTEAASAPKGALTIAVEGGSFAIPLEGVIDIGAEKARLAKTLEKLEKDMAGLRGRLGNPNFVASAPEEVVDEARTRLEQGEEEGAKLSAALARLSEIA</sequence>
<name>SYV_CERS4</name>
<feature type="chain" id="PRO_0000224546" description="Valine--tRNA ligase">
    <location>
        <begin position="1"/>
        <end position="987"/>
    </location>
</feature>
<feature type="coiled-coil region" evidence="1">
    <location>
        <begin position="917"/>
        <end position="985"/>
    </location>
</feature>
<feature type="short sequence motif" description="'HIGH' region">
    <location>
        <begin position="45"/>
        <end position="55"/>
    </location>
</feature>
<feature type="short sequence motif" description="'KMSKS' region">
    <location>
        <begin position="634"/>
        <end position="638"/>
    </location>
</feature>
<feature type="binding site" evidence="1">
    <location>
        <position position="637"/>
    </location>
    <ligand>
        <name>ATP</name>
        <dbReference type="ChEBI" id="CHEBI:30616"/>
    </ligand>
</feature>
<gene>
    <name evidence="1" type="primary">valS</name>
    <name type="ordered locus">RHOS4_05710</name>
    <name type="ORF">RSP_1989</name>
</gene>
<evidence type="ECO:0000255" key="1">
    <source>
        <dbReference type="HAMAP-Rule" id="MF_02004"/>
    </source>
</evidence>
<accession>Q3J4Z5</accession>
<keyword id="KW-0030">Aminoacyl-tRNA synthetase</keyword>
<keyword id="KW-0067">ATP-binding</keyword>
<keyword id="KW-0175">Coiled coil</keyword>
<keyword id="KW-0963">Cytoplasm</keyword>
<keyword id="KW-0436">Ligase</keyword>
<keyword id="KW-0547">Nucleotide-binding</keyword>
<keyword id="KW-0648">Protein biosynthesis</keyword>
<keyword id="KW-1185">Reference proteome</keyword>
<proteinExistence type="inferred from homology"/>
<organism>
    <name type="scientific">Cereibacter sphaeroides (strain ATCC 17023 / DSM 158 / JCM 6121 / CCUG 31486 / LMG 2827 / NBRC 12203 / NCIMB 8253 / ATH 2.4.1.)</name>
    <name type="common">Rhodobacter sphaeroides</name>
    <dbReference type="NCBI Taxonomy" id="272943"/>
    <lineage>
        <taxon>Bacteria</taxon>
        <taxon>Pseudomonadati</taxon>
        <taxon>Pseudomonadota</taxon>
        <taxon>Alphaproteobacteria</taxon>
        <taxon>Rhodobacterales</taxon>
        <taxon>Paracoccaceae</taxon>
        <taxon>Cereibacter</taxon>
    </lineage>
</organism>